<feature type="chain" id="PRO_0000299092" description="Nucleoprotein">
    <location>
        <begin position="1"/>
        <end position="451"/>
    </location>
</feature>
<feature type="modified residue" description="Phosphoserine; by host CK2" evidence="1">
    <location>
        <position position="389"/>
    </location>
</feature>
<feature type="sequence variant" description="In strain: Isolate Human/South Africa/Rv6.">
    <original>T</original>
    <variation>M</variation>
    <location>
        <position position="107"/>
    </location>
</feature>
<feature type="sequence variant" description="In strain: Isolate 86132AS and Isolate 94286.">
    <original>D</original>
    <variation>E</variation>
    <location>
        <position position="127"/>
    </location>
</feature>
<protein>
    <recommendedName>
        <fullName>Nucleoprotein</fullName>
        <shortName>NP</shortName>
    </recommendedName>
    <alternativeName>
        <fullName>Nucleocapsid protein</fullName>
        <shortName>Protein N</shortName>
    </alternativeName>
</protein>
<organism>
    <name type="scientific">Duvenhage virus</name>
    <name type="common">DUVV</name>
    <dbReference type="NCBI Taxonomy" id="38767"/>
    <lineage>
        <taxon>Viruses</taxon>
        <taxon>Riboviria</taxon>
        <taxon>Orthornavirae</taxon>
        <taxon>Negarnaviricota</taxon>
        <taxon>Haploviricotina</taxon>
        <taxon>Monjiviricetes</taxon>
        <taxon>Mononegavirales</taxon>
        <taxon>Rhabdoviridae</taxon>
        <taxon>Alpharhabdovirinae</taxon>
        <taxon>Lyssavirus</taxon>
    </lineage>
</organism>
<proteinExistence type="inferred from homology"/>
<name>NCAP_DUVV</name>
<sequence length="451" mass="50696">MDAERIVFKVRNQLVSVKPEVISDQYEYKYPAITDKKKPSITLGRAPDLKTAYKSILSGMNAAKLDPDDVCSYLAGAMILFEGVCPEDWVSYGIHIARKGDKITPATLVDIVRTNTEGNWAQTGGQDLTRDPTISEHASLVGLLLCLYRLSKIVGQNTGNYKTNVADRMEQIFETAPFVKIVEHHTLMTTHKMCANWSTIPNFRFLAGTYDMFFSRVDHLYSAIRVGTVVTAYEDCSGLVSFTGFIKQINLTAREAILYFFHKNFEEEIKRMFEPGQETAVPHSYFIHFRSLGLSGKSPYSSNAVGHVFNLIHFVGCYMGQIRSLNATVIQSCAPHEMSVLGGYLGEEFFGKGTFERRFFRDEKELQDYEEAEATKIEAALADDGTVNSDDEDFFSGDTRSPEAVYTRIMMNGGRLKGAHIRRYVSVSSSHQARPNSFAEFLNKTYSSDSR</sequence>
<accession>Q66453</accession>
<accession>A3QU35</accession>
<accession>O41853</accession>
<accession>Q49AU8</accession>
<accession>Q49AU9</accession>
<accession>Q8QPB9</accession>
<accession>Q8QPC0</accession>
<accession>Q8QPC1</accession>
<reference key="1">
    <citation type="journal article" date="1995" name="Virology">
        <title>Genetic polymorphism in the rabies virus nucleoprotein gene.</title>
        <authorList>
            <person name="Kissi B."/>
            <person name="Tordo N."/>
            <person name="Bourhy H."/>
        </authorList>
    </citation>
    <scope>NUCLEOTIDE SEQUENCE [GENOMIC RNA]</scope>
    <source>
        <strain>Isolate 86132AS</strain>
    </source>
</reference>
<reference key="2">
    <citation type="journal article" date="2005" name="J. Virol.">
        <title>Phylogeography, population dynamics, and molecular evolution of European bat lyssaviruses.</title>
        <authorList>
            <person name="Davis P.L."/>
            <person name="Holmes E.C."/>
            <person name="Larrous F."/>
            <person name="Van der Poel W.H."/>
            <person name="Tjornehoj K."/>
            <person name="Alonso W.J."/>
            <person name="Bourhy H."/>
        </authorList>
    </citation>
    <scope>NUCLEOTIDE SEQUENCE [GENOMIC RNA]</scope>
    <source>
        <strain>Isolate 94286</strain>
        <strain>Isolate N86132</strain>
    </source>
</reference>
<reference key="3">
    <citation type="journal article" date="1997" name="J. Gen. Virol.">
        <title>Evolution of European bat lyssaviruses.</title>
        <authorList>
            <person name="Amengual B."/>
            <person name="Whitby J.E."/>
            <person name="King A."/>
            <person name="Cobo J.S."/>
            <person name="Bourhy H."/>
        </authorList>
    </citation>
    <scope>NUCLEOTIDE SEQUENCE [GENOMIC RNA] OF 1-133</scope>
    <source>
        <strain>94286SA</strain>
    </source>
</reference>
<reference key="4">
    <citation type="journal article" date="2002" name="Arch. Virol.">
        <title>Phylogenetic comparison of the genus Lyssavirus using distal coding sequences of the glycoprotein and nucleoprotein genes.</title>
        <authorList>
            <person name="Johnson N."/>
            <person name="McElhinney L.M."/>
            <person name="Smith J."/>
            <person name="Lowings P."/>
            <person name="Fooks A.R."/>
        </authorList>
    </citation>
    <scope>NUCLEOTIDE SEQUENCE [GENOMIC RNA] OF 1-135</scope>
    <source>
        <strain>Isolate Bat/South Africa/Rv139</strain>
        <strain>Isolate Bat/Zimbabwe/Rv131</strain>
        <strain>Isolate Human/South Africa/Rv6</strain>
    </source>
</reference>
<reference key="5">
    <citation type="journal article" date="2006" name="Emerg. Infect. Dis.">
        <title>Fatal human infection with rabies-related Duvenhage virus, South Africa.</title>
        <authorList>
            <person name="Paweska J.T."/>
            <person name="Blumberg L.H."/>
            <person name="Liebenberg C."/>
            <person name="Hewlett R.H."/>
            <person name="Grobbelaar A.A."/>
            <person name="Leman P.A."/>
            <person name="Croft J.E."/>
            <person name="Nel L.H."/>
            <person name="Nutt L."/>
            <person name="Swanepoel R."/>
        </authorList>
    </citation>
    <scope>NUCLEOTIDE SEQUENCE [GENOMIC RNA] OF 12-170</scope>
    <source>
        <strain>SPU94.06</strain>
    </source>
</reference>
<comment type="function">
    <text evidence="1">Encapsidates the genome, protecting it from nucleases. If expressed without protein P it binds non-specifically RNA and therefore can bind it's own mRNA. Interaction with protein P abolishes any non-specific RNA binding, and prevents phosphorylation. The soluble N-P complex encapsidates specifically the genomic RNA, with protein N protecting the genome like a pearl necklace. The encapsidated genomic RNA is termed the nucleocapsid (NC) and serves as template for viral transcription and replication. Protein N binds protein P in the NC through a different interaction, and can be phosphorylated. Subsequent viral replication is dependent on intracellular concentration of newly synthesized protein N. During replication, encapsidation by protein N is coupled to RNA synthesis and all replicative products are resistant to nucleases (By similarity).</text>
</comment>
<comment type="subunit">
    <text evidence="1">Homomultimerizes to form the nucleocapsid. Binds to viral genomic RNA (By similarity).</text>
</comment>
<comment type="subcellular location">
    <subcellularLocation>
        <location>Virion</location>
    </subcellularLocation>
    <subcellularLocation>
        <location evidence="1">Host cytoplasm</location>
    </subcellularLocation>
</comment>
<comment type="PTM">
    <text evidence="1">Phosphorylated by host.</text>
</comment>
<comment type="similarity">
    <text evidence="2">Belongs to the lyssavirus nucleocapsid protein family.</text>
</comment>
<gene>
    <name type="primary">N</name>
</gene>
<keyword id="KW-0167">Capsid protein</keyword>
<keyword id="KW-1139">Helical capsid protein</keyword>
<keyword id="KW-1035">Host cytoplasm</keyword>
<keyword id="KW-0597">Phosphoprotein</keyword>
<keyword id="KW-0687">Ribonucleoprotein</keyword>
<keyword id="KW-0694">RNA-binding</keyword>
<keyword id="KW-0766">Superantigen</keyword>
<keyword id="KW-0543">Viral nucleoprotein</keyword>
<keyword id="KW-0946">Virion</keyword>
<dbReference type="EMBL" id="U22848">
    <property type="protein sequence ID" value="AAA80285.1"/>
    <property type="molecule type" value="Genomic_RNA"/>
</dbReference>
<dbReference type="EMBL" id="AY996323">
    <property type="protein sequence ID" value="AAY53552.1"/>
    <property type="molecule type" value="Genomic_RNA"/>
</dbReference>
<dbReference type="EMBL" id="AY996324">
    <property type="protein sequence ID" value="AAY53553.1"/>
    <property type="molecule type" value="Genomic_RNA"/>
</dbReference>
<dbReference type="EMBL" id="U89483">
    <property type="protein sequence ID" value="AAB71129.1"/>
    <property type="molecule type" value="Genomic_RNA"/>
</dbReference>
<dbReference type="EMBL" id="AY062079">
    <property type="protein sequence ID" value="AAL47619.1"/>
    <property type="molecule type" value="Genomic_RNA"/>
</dbReference>
<dbReference type="EMBL" id="AY062080">
    <property type="protein sequence ID" value="AAL47620.1"/>
    <property type="molecule type" value="Genomic_RNA"/>
</dbReference>
<dbReference type="EMBL" id="AY062081">
    <property type="protein sequence ID" value="AAL47621.1"/>
    <property type="molecule type" value="Genomic_RNA"/>
</dbReference>
<dbReference type="EMBL" id="DQ676932">
    <property type="protein sequence ID" value="ABG74925.1"/>
    <property type="molecule type" value="Genomic_RNA"/>
</dbReference>
<dbReference type="RefSeq" id="YP_007641402.1">
    <property type="nucleotide sequence ID" value="NC_020810.1"/>
</dbReference>
<dbReference type="SMR" id="Q66453"/>
<dbReference type="GeneID" id="14857942"/>
<dbReference type="KEGG" id="vg:14857942"/>
<dbReference type="OrthoDB" id="22890at10239"/>
<dbReference type="GO" id="GO:0019029">
    <property type="term" value="C:helical viral capsid"/>
    <property type="evidence" value="ECO:0007669"/>
    <property type="project" value="UniProtKB-KW"/>
</dbReference>
<dbReference type="GO" id="GO:0030430">
    <property type="term" value="C:host cell cytoplasm"/>
    <property type="evidence" value="ECO:0007669"/>
    <property type="project" value="UniProtKB-SubCell"/>
</dbReference>
<dbReference type="GO" id="GO:1990904">
    <property type="term" value="C:ribonucleoprotein complex"/>
    <property type="evidence" value="ECO:0007669"/>
    <property type="project" value="UniProtKB-KW"/>
</dbReference>
<dbReference type="GO" id="GO:0019013">
    <property type="term" value="C:viral nucleocapsid"/>
    <property type="evidence" value="ECO:0007669"/>
    <property type="project" value="UniProtKB-KW"/>
</dbReference>
<dbReference type="GO" id="GO:0003723">
    <property type="term" value="F:RNA binding"/>
    <property type="evidence" value="ECO:0007669"/>
    <property type="project" value="UniProtKB-KW"/>
</dbReference>
<dbReference type="Gene3D" id="1.10.3610.10">
    <property type="entry name" value="Nucleoprotein"/>
    <property type="match status" value="1"/>
</dbReference>
<dbReference type="Gene3D" id="1.10.3570.10">
    <property type="entry name" value="Rhabdovirus nucleocapsid protein like domain"/>
    <property type="match status" value="1"/>
</dbReference>
<dbReference type="InterPro" id="IPR000448">
    <property type="entry name" value="Rhabdo_ncapsid"/>
</dbReference>
<dbReference type="InterPro" id="IPR023331">
    <property type="entry name" value="Rhabdovirus_ncapsid_C"/>
</dbReference>
<dbReference type="InterPro" id="IPR023330">
    <property type="entry name" value="Rhabdovirus_ncapsid_N"/>
</dbReference>
<dbReference type="InterPro" id="IPR035961">
    <property type="entry name" value="Rhabdovirus_nucleoprotein-like"/>
</dbReference>
<dbReference type="Pfam" id="PF00945">
    <property type="entry name" value="Rhabdo_ncap"/>
    <property type="match status" value="1"/>
</dbReference>
<dbReference type="SUPFAM" id="SSF140809">
    <property type="entry name" value="Rhabdovirus nucleoprotein-like"/>
    <property type="match status" value="1"/>
</dbReference>
<organismHost>
    <name type="scientific">Homo sapiens</name>
    <name type="common">Human</name>
    <dbReference type="NCBI Taxonomy" id="9606"/>
</organismHost>
<organismHost>
    <name type="scientific">Mammalia</name>
    <dbReference type="NCBI Taxonomy" id="40674"/>
</organismHost>
<evidence type="ECO:0000250" key="1"/>
<evidence type="ECO:0000305" key="2"/>